<name>IMA8_BOVIN</name>
<reference key="1">
    <citation type="journal article" date="2009" name="Biol. Reprod.">
        <title>Role of importin alpha8, a new member of the importin alpha family of nuclear transport proteins, in early embryonic development in cattle.</title>
        <authorList>
            <person name="Tejomurtula J."/>
            <person name="Lee K.B."/>
            <person name="Tripurani S.K."/>
            <person name="Smith G.W."/>
            <person name="Yao J."/>
        </authorList>
    </citation>
    <scope>NUCLEOTIDE SEQUENCE [MRNA]</scope>
    <scope>INTERACTION WITH NPM2</scope>
    <scope>TISSUE SPECIFICITY</scope>
    <scope>DEVELOPMENTAL STAGE</scope>
    <source>
        <tissue>Embryonic ovary</tissue>
    </source>
</reference>
<reference key="2">
    <citation type="journal article" date="2009" name="Science">
        <title>The genome sequence of taurine cattle: a window to ruminant biology and evolution.</title>
        <authorList>
            <consortium name="The bovine genome sequencing and analysis consortium"/>
        </authorList>
    </citation>
    <scope>NUCLEOTIDE SEQUENCE [LARGE SCALE GENOMIC DNA]</scope>
    <source>
        <strain>Hereford</strain>
    </source>
</reference>
<keyword id="KW-0539">Nucleus</keyword>
<keyword id="KW-0653">Protein transport</keyword>
<keyword id="KW-1185">Reference proteome</keyword>
<keyword id="KW-0677">Repeat</keyword>
<keyword id="KW-0813">Transport</keyword>
<accession>C1JZ66</accession>
<accession>F1MPD2</accession>
<protein>
    <recommendedName>
        <fullName>Importin subunit alpha-8</fullName>
    </recommendedName>
    <alternativeName>
        <fullName>Karyopherin subunit alpha-7</fullName>
    </alternativeName>
</protein>
<organism>
    <name type="scientific">Bos taurus</name>
    <name type="common">Bovine</name>
    <dbReference type="NCBI Taxonomy" id="9913"/>
    <lineage>
        <taxon>Eukaryota</taxon>
        <taxon>Metazoa</taxon>
        <taxon>Chordata</taxon>
        <taxon>Craniata</taxon>
        <taxon>Vertebrata</taxon>
        <taxon>Euteleostomi</taxon>
        <taxon>Mammalia</taxon>
        <taxon>Eutheria</taxon>
        <taxon>Laurasiatheria</taxon>
        <taxon>Artiodactyla</taxon>
        <taxon>Ruminantia</taxon>
        <taxon>Pecora</taxon>
        <taxon>Bovidae</taxon>
        <taxon>Bovinae</taxon>
        <taxon>Bos</taxon>
    </lineage>
</organism>
<dbReference type="EMBL" id="FJ754641">
    <property type="protein sequence ID" value="ACO50696.1"/>
    <property type="molecule type" value="mRNA"/>
</dbReference>
<dbReference type="EMBL" id="AAFC03113471">
    <property type="status" value="NOT_ANNOTATED_CDS"/>
    <property type="molecule type" value="Genomic_DNA"/>
</dbReference>
<dbReference type="RefSeq" id="NP_001157419.1">
    <property type="nucleotide sequence ID" value="NM_001163947.1"/>
</dbReference>
<dbReference type="SMR" id="C1JZ66"/>
<dbReference type="STRING" id="9913.ENSBTAP00000020894"/>
<dbReference type="PaxDb" id="9913-ENSBTAP00000020894"/>
<dbReference type="Ensembl" id="ENSBTAT00000020894.6">
    <property type="protein sequence ID" value="ENSBTAP00000020894.5"/>
    <property type="gene ID" value="ENSBTAG00000015737.7"/>
</dbReference>
<dbReference type="GeneID" id="789280"/>
<dbReference type="KEGG" id="bta:789280"/>
<dbReference type="CTD" id="402569"/>
<dbReference type="VEuPathDB" id="HostDB:ENSBTAG00000015737"/>
<dbReference type="VGNC" id="VGNC:30706">
    <property type="gene designation" value="KPNA7"/>
</dbReference>
<dbReference type="eggNOG" id="KOG0166">
    <property type="taxonomic scope" value="Eukaryota"/>
</dbReference>
<dbReference type="GeneTree" id="ENSGT01050000244891"/>
<dbReference type="HOGENOM" id="CLU_018084_6_0_1"/>
<dbReference type="InParanoid" id="C1JZ66"/>
<dbReference type="OMA" id="HENRQIG"/>
<dbReference type="OrthoDB" id="29145at2759"/>
<dbReference type="TreeFam" id="TF101178"/>
<dbReference type="Proteomes" id="UP000009136">
    <property type="component" value="Chromosome 25"/>
</dbReference>
<dbReference type="Bgee" id="ENSBTAG00000015737">
    <property type="expression patterns" value="Expressed in oocyte and 14 other cell types or tissues"/>
</dbReference>
<dbReference type="GO" id="GO:0005737">
    <property type="term" value="C:cytoplasm"/>
    <property type="evidence" value="ECO:0007669"/>
    <property type="project" value="InterPro"/>
</dbReference>
<dbReference type="GO" id="GO:0005634">
    <property type="term" value="C:nucleus"/>
    <property type="evidence" value="ECO:0000318"/>
    <property type="project" value="GO_Central"/>
</dbReference>
<dbReference type="GO" id="GO:0061608">
    <property type="term" value="F:nuclear import signal receptor activity"/>
    <property type="evidence" value="ECO:0000318"/>
    <property type="project" value="GO_Central"/>
</dbReference>
<dbReference type="GO" id="GO:0008139">
    <property type="term" value="F:nuclear localization sequence binding"/>
    <property type="evidence" value="ECO:0000318"/>
    <property type="project" value="GO_Central"/>
</dbReference>
<dbReference type="GO" id="GO:0006607">
    <property type="term" value="P:NLS-bearing protein import into nucleus"/>
    <property type="evidence" value="ECO:0000318"/>
    <property type="project" value="GO_Central"/>
</dbReference>
<dbReference type="FunFam" id="1.25.10.10:FF:000009">
    <property type="entry name" value="Importin subunit alpha"/>
    <property type="match status" value="1"/>
</dbReference>
<dbReference type="Gene3D" id="1.20.5.690">
    <property type="entry name" value="Importin-alpha, importin-beta-binding domain"/>
    <property type="match status" value="1"/>
</dbReference>
<dbReference type="Gene3D" id="1.25.10.10">
    <property type="entry name" value="Leucine-rich Repeat Variant"/>
    <property type="match status" value="1"/>
</dbReference>
<dbReference type="InterPro" id="IPR011989">
    <property type="entry name" value="ARM-like"/>
</dbReference>
<dbReference type="InterPro" id="IPR016024">
    <property type="entry name" value="ARM-type_fold"/>
</dbReference>
<dbReference type="InterPro" id="IPR032413">
    <property type="entry name" value="Arm_3"/>
</dbReference>
<dbReference type="InterPro" id="IPR000225">
    <property type="entry name" value="Armadillo"/>
</dbReference>
<dbReference type="InterPro" id="IPR002652">
    <property type="entry name" value="Importin-a_IBB"/>
</dbReference>
<dbReference type="InterPro" id="IPR036975">
    <property type="entry name" value="Importin-a_IBB_sf"/>
</dbReference>
<dbReference type="InterPro" id="IPR024931">
    <property type="entry name" value="Importin_alpha"/>
</dbReference>
<dbReference type="InterPro" id="IPR004155">
    <property type="entry name" value="PBS_lyase_HEAT"/>
</dbReference>
<dbReference type="PANTHER" id="PTHR23316">
    <property type="entry name" value="IMPORTIN ALPHA"/>
    <property type="match status" value="1"/>
</dbReference>
<dbReference type="Pfam" id="PF00514">
    <property type="entry name" value="Arm"/>
    <property type="match status" value="6"/>
</dbReference>
<dbReference type="Pfam" id="PF16186">
    <property type="entry name" value="Arm_3"/>
    <property type="match status" value="1"/>
</dbReference>
<dbReference type="Pfam" id="PF01749">
    <property type="entry name" value="IBB"/>
    <property type="match status" value="1"/>
</dbReference>
<dbReference type="PIRSF" id="PIRSF005673">
    <property type="entry name" value="Importin_alpha"/>
    <property type="match status" value="1"/>
</dbReference>
<dbReference type="SMART" id="SM00185">
    <property type="entry name" value="ARM"/>
    <property type="match status" value="8"/>
</dbReference>
<dbReference type="SMART" id="SM00567">
    <property type="entry name" value="EZ_HEAT"/>
    <property type="match status" value="4"/>
</dbReference>
<dbReference type="SUPFAM" id="SSF48371">
    <property type="entry name" value="ARM repeat"/>
    <property type="match status" value="1"/>
</dbReference>
<dbReference type="PROSITE" id="PS50176">
    <property type="entry name" value="ARM_REPEAT"/>
    <property type="match status" value="3"/>
</dbReference>
<dbReference type="PROSITE" id="PS51214">
    <property type="entry name" value="IBB"/>
    <property type="match status" value="1"/>
</dbReference>
<feature type="chain" id="PRO_0000413536" description="Importin subunit alpha-8">
    <location>
        <begin position="1"/>
        <end position="522"/>
    </location>
</feature>
<feature type="domain" description="IBB" evidence="2">
    <location>
        <begin position="1"/>
        <end position="57"/>
    </location>
</feature>
<feature type="repeat" description="ARM 1">
    <location>
        <begin position="100"/>
        <end position="140"/>
    </location>
</feature>
<feature type="repeat" description="ARM 2">
    <location>
        <begin position="143"/>
        <end position="182"/>
    </location>
</feature>
<feature type="repeat" description="ARM 3">
    <location>
        <begin position="185"/>
        <end position="225"/>
    </location>
</feature>
<feature type="repeat" description="ARM 4">
    <location>
        <begin position="228"/>
        <end position="267"/>
    </location>
</feature>
<feature type="repeat" description="ARM 5">
    <location>
        <begin position="270"/>
        <end position="309"/>
    </location>
</feature>
<feature type="repeat" description="ARM 6">
    <location>
        <begin position="312"/>
        <end position="351"/>
    </location>
</feature>
<feature type="repeat" description="ARM 7">
    <location>
        <begin position="354"/>
        <end position="393"/>
    </location>
</feature>
<feature type="repeat" description="ARM 8">
    <location>
        <begin position="397"/>
        <end position="436"/>
    </location>
</feature>
<feature type="sequence conflict" description="In Ref. 1; ACO50696." evidence="4" ref="1">
    <original>E</original>
    <variation>G</variation>
    <location>
        <position position="71"/>
    </location>
</feature>
<feature type="sequence conflict" description="In Ref. 1; ACO50696." evidence="4" ref="1">
    <original>D</original>
    <variation>N</variation>
    <location>
        <position position="189"/>
    </location>
</feature>
<feature type="sequence conflict" description="In Ref. 1; ACO50696." evidence="4" ref="1">
    <original>A</original>
    <variation>T</variation>
    <location>
        <position position="193"/>
    </location>
</feature>
<feature type="sequence conflict" description="In Ref. 1; ACO50696." evidence="4" ref="1">
    <original>F</original>
    <variation>L</variation>
    <location>
        <position position="493"/>
    </location>
</feature>
<comment type="function">
    <text evidence="1">Functions in nuclear protein import.</text>
</comment>
<comment type="subunit">
    <text evidence="1">Binds to importin subunit beta-1/KPNB1 via the IBB domain; this complex dissociates in the presence of RAN-GTP. Shows a limited binding to the RB1 nuclear localization signal (NLS), but not to the SV40, nor NPM1 NLSs. Interacts with RSL1D1 (By similarity). Binds to the NPM2 nuclear localization signal.</text>
</comment>
<comment type="subcellular location">
    <subcellularLocation>
        <location evidence="1">Nucleus</location>
    </subcellularLocation>
</comment>
<comment type="tissue specificity">
    <text evidence="3">Expressed almost exclusively in ovary, in germinal vesicle (GV)-stage oocytes, but not in granulosa, nor theca cells. Detected at very low levels in testis.</text>
</comment>
<comment type="developmental stage">
    <text evidence="3">Expressed at high levels in GV- and MII-stage oocytes, as well as in 2-cell embryos. Levels drop sharply by the blastocyst stage (at protein level). Not detectable in fetal ovaries 90 and 95 days of gestation, but highly abundant in fetal ovaries of late gestation.</text>
</comment>
<comment type="similarity">
    <text evidence="4">Belongs to the importin alpha family.</text>
</comment>
<evidence type="ECO:0000250" key="1">
    <source>
        <dbReference type="UniProtKB" id="A9QM74"/>
    </source>
</evidence>
<evidence type="ECO:0000255" key="2">
    <source>
        <dbReference type="PROSITE-ProRule" id="PRU00561"/>
    </source>
</evidence>
<evidence type="ECO:0000269" key="3">
    <source>
    </source>
</evidence>
<evidence type="ECO:0000305" key="4"/>
<sequence length="522" mass="57362">MPTLDAPEERLRKFKYRGKDASARRQQRIAVSLELRKAKKDEQALKRRNITDVSLDPSDQQTKGVSLTLQEIISGVNASDPELCFQATQAARKMLSREKNPPLKLIVDAGLIPRLVELLKSSLHPRLQFEAAWALTNIASGASELTRAVVVGGAIQPLVELLSSPHMTVCEQAVWALGNIAGDGPEFRDNVIASDAIPHLLTLVSSSIPVPFLRNIAWTLSNLCRNKNPYPSDHAVKQMLPALFYLLGHPDREVLSDTCWALSYLTDGCDARIGQVVDTGVLPRLVELMSSSELNILTPSLRTVGNIVTGTDHQTQLALDAGILGVLPQLLTHPRPSIQKEAAWALSNVAAGPRQHIQRLIACGALPPLVAVLKNGEFKVQKEAVWTVANFTTGGSVEQLIQLVQAGVLEPLINLLTIPDNKMVIIILDVLFFILQAAEKISQKENMCLLIEGLGGLDRIEALQLHENHQVALTALNIIERHFSEEEETVTAFRARDQDHKFLKDLTNTYHCCTTPKPGPRP</sequence>
<gene>
    <name type="primary">KPNA7</name>
</gene>
<proteinExistence type="evidence at protein level"/>